<feature type="chain" id="PRO_0000290693" description="Undecaprenyl-diphosphatase 1">
    <location>
        <begin position="1"/>
        <end position="276"/>
    </location>
</feature>
<feature type="transmembrane region" description="Helical" evidence="1">
    <location>
        <begin position="4"/>
        <end position="24"/>
    </location>
</feature>
<feature type="transmembrane region" description="Helical" evidence="1">
    <location>
        <begin position="45"/>
        <end position="62"/>
    </location>
</feature>
<feature type="transmembrane region" description="Helical" evidence="1">
    <location>
        <begin position="83"/>
        <end position="103"/>
    </location>
</feature>
<feature type="transmembrane region" description="Helical" evidence="1">
    <location>
        <begin position="108"/>
        <end position="128"/>
    </location>
</feature>
<feature type="transmembrane region" description="Helical" evidence="1">
    <location>
        <begin position="187"/>
        <end position="207"/>
    </location>
</feature>
<feature type="transmembrane region" description="Helical" evidence="1">
    <location>
        <begin position="217"/>
        <end position="237"/>
    </location>
</feature>
<feature type="transmembrane region" description="Helical" evidence="1">
    <location>
        <begin position="252"/>
        <end position="272"/>
    </location>
</feature>
<reference key="1">
    <citation type="submission" date="2006-08" db="EMBL/GenBank/DDBJ databases">
        <title>Complete sequence of chromosome 1 of Burkholderia cepacia AMMD.</title>
        <authorList>
            <person name="Copeland A."/>
            <person name="Lucas S."/>
            <person name="Lapidus A."/>
            <person name="Barry K."/>
            <person name="Detter J.C."/>
            <person name="Glavina del Rio T."/>
            <person name="Hammon N."/>
            <person name="Israni S."/>
            <person name="Pitluck S."/>
            <person name="Bruce D."/>
            <person name="Chain P."/>
            <person name="Malfatti S."/>
            <person name="Shin M."/>
            <person name="Vergez L."/>
            <person name="Schmutz J."/>
            <person name="Larimer F."/>
            <person name="Land M."/>
            <person name="Hauser L."/>
            <person name="Kyrpides N."/>
            <person name="Kim E."/>
            <person name="Parke J."/>
            <person name="Coenye T."/>
            <person name="Konstantinidis K."/>
            <person name="Ramette A."/>
            <person name="Tiedje J."/>
            <person name="Richardson P."/>
        </authorList>
    </citation>
    <scope>NUCLEOTIDE SEQUENCE [LARGE SCALE GENOMIC DNA]</scope>
    <source>
        <strain>ATCC BAA-244 / DSM 16087 / CCUG 44356 / LMG 19182 / AMMD</strain>
    </source>
</reference>
<sequence length="276" mass="30303">MDWILICKALILGVVEGLTEFLPVSSTGHLIVAGSFLNFNDAHAKTFDVVIQFGAILAVCWEYRQRIVSIVTGLPSRPDAQRFTLNVVIATIPAIALGLLFEKKIKAVLFSPVPVAFALVVGGAIILWAEARQRERREPPRVQSIDALTPLDALKVGLAQCFALVPGMSRSGSTIIGGMLFGLDRRVATEFSFFLAIPIIFGATLYETVKDWQAFTVDSLGLFALGLVAAFVSAFVCVRWLLRFVATHDFTVFAWYRIAFGLFVLLVGYSGWLNWA</sequence>
<evidence type="ECO:0000255" key="1">
    <source>
        <dbReference type="HAMAP-Rule" id="MF_01006"/>
    </source>
</evidence>
<comment type="function">
    <text evidence="1">Catalyzes the dephosphorylation of undecaprenyl diphosphate (UPP). Confers resistance to bacitracin.</text>
</comment>
<comment type="catalytic activity">
    <reaction evidence="1">
        <text>di-trans,octa-cis-undecaprenyl diphosphate + H2O = di-trans,octa-cis-undecaprenyl phosphate + phosphate + H(+)</text>
        <dbReference type="Rhea" id="RHEA:28094"/>
        <dbReference type="ChEBI" id="CHEBI:15377"/>
        <dbReference type="ChEBI" id="CHEBI:15378"/>
        <dbReference type="ChEBI" id="CHEBI:43474"/>
        <dbReference type="ChEBI" id="CHEBI:58405"/>
        <dbReference type="ChEBI" id="CHEBI:60392"/>
        <dbReference type="EC" id="3.6.1.27"/>
    </reaction>
</comment>
<comment type="subcellular location">
    <subcellularLocation>
        <location evidence="1">Cell inner membrane</location>
        <topology evidence="1">Multi-pass membrane protein</topology>
    </subcellularLocation>
</comment>
<comment type="miscellaneous">
    <text>Bacitracin is thought to be involved in the inhibition of peptidoglycan synthesis by sequestering undecaprenyl diphosphate, thereby reducing the pool of lipid carrier available.</text>
</comment>
<comment type="similarity">
    <text evidence="1">Belongs to the UppP family.</text>
</comment>
<keyword id="KW-0046">Antibiotic resistance</keyword>
<keyword id="KW-0997">Cell inner membrane</keyword>
<keyword id="KW-1003">Cell membrane</keyword>
<keyword id="KW-0133">Cell shape</keyword>
<keyword id="KW-0961">Cell wall biogenesis/degradation</keyword>
<keyword id="KW-0378">Hydrolase</keyword>
<keyword id="KW-0472">Membrane</keyword>
<keyword id="KW-0573">Peptidoglycan synthesis</keyword>
<keyword id="KW-0812">Transmembrane</keyword>
<keyword id="KW-1133">Transmembrane helix</keyword>
<organism>
    <name type="scientific">Burkholderia ambifaria (strain ATCC BAA-244 / DSM 16087 / CCUG 44356 / LMG 19182 / AMMD)</name>
    <name type="common">Burkholderia cepacia (strain AMMD)</name>
    <dbReference type="NCBI Taxonomy" id="339670"/>
    <lineage>
        <taxon>Bacteria</taxon>
        <taxon>Pseudomonadati</taxon>
        <taxon>Pseudomonadota</taxon>
        <taxon>Betaproteobacteria</taxon>
        <taxon>Burkholderiales</taxon>
        <taxon>Burkholderiaceae</taxon>
        <taxon>Burkholderia</taxon>
        <taxon>Burkholderia cepacia complex</taxon>
    </lineage>
</organism>
<dbReference type="EC" id="3.6.1.27" evidence="1"/>
<dbReference type="EMBL" id="CP000440">
    <property type="protein sequence ID" value="ABI86353.1"/>
    <property type="molecule type" value="Genomic_DNA"/>
</dbReference>
<dbReference type="RefSeq" id="WP_011656167.1">
    <property type="nucleotide sequence ID" value="NC_008390.1"/>
</dbReference>
<dbReference type="SMR" id="Q0BHM0"/>
<dbReference type="GeneID" id="93083798"/>
<dbReference type="KEGG" id="bam:Bamb_0794"/>
<dbReference type="PATRIC" id="fig|339670.21.peg.796"/>
<dbReference type="eggNOG" id="COG1968">
    <property type="taxonomic scope" value="Bacteria"/>
</dbReference>
<dbReference type="Proteomes" id="UP000000662">
    <property type="component" value="Chromosome 1"/>
</dbReference>
<dbReference type="GO" id="GO:0005886">
    <property type="term" value="C:plasma membrane"/>
    <property type="evidence" value="ECO:0007669"/>
    <property type="project" value="UniProtKB-SubCell"/>
</dbReference>
<dbReference type="GO" id="GO:0050380">
    <property type="term" value="F:undecaprenyl-diphosphatase activity"/>
    <property type="evidence" value="ECO:0007669"/>
    <property type="project" value="UniProtKB-UniRule"/>
</dbReference>
<dbReference type="GO" id="GO:0071555">
    <property type="term" value="P:cell wall organization"/>
    <property type="evidence" value="ECO:0007669"/>
    <property type="project" value="UniProtKB-KW"/>
</dbReference>
<dbReference type="GO" id="GO:0009252">
    <property type="term" value="P:peptidoglycan biosynthetic process"/>
    <property type="evidence" value="ECO:0007669"/>
    <property type="project" value="UniProtKB-KW"/>
</dbReference>
<dbReference type="GO" id="GO:0008360">
    <property type="term" value="P:regulation of cell shape"/>
    <property type="evidence" value="ECO:0007669"/>
    <property type="project" value="UniProtKB-KW"/>
</dbReference>
<dbReference type="GO" id="GO:0046677">
    <property type="term" value="P:response to antibiotic"/>
    <property type="evidence" value="ECO:0007669"/>
    <property type="project" value="UniProtKB-UniRule"/>
</dbReference>
<dbReference type="HAMAP" id="MF_01006">
    <property type="entry name" value="Undec_diphosphatase"/>
    <property type="match status" value="1"/>
</dbReference>
<dbReference type="InterPro" id="IPR003824">
    <property type="entry name" value="UppP"/>
</dbReference>
<dbReference type="NCBIfam" id="NF001389">
    <property type="entry name" value="PRK00281.1-2"/>
    <property type="match status" value="1"/>
</dbReference>
<dbReference type="NCBIfam" id="NF001390">
    <property type="entry name" value="PRK00281.1-4"/>
    <property type="match status" value="1"/>
</dbReference>
<dbReference type="NCBIfam" id="TIGR00753">
    <property type="entry name" value="undec_PP_bacA"/>
    <property type="match status" value="1"/>
</dbReference>
<dbReference type="PANTHER" id="PTHR30622">
    <property type="entry name" value="UNDECAPRENYL-DIPHOSPHATASE"/>
    <property type="match status" value="1"/>
</dbReference>
<dbReference type="PANTHER" id="PTHR30622:SF3">
    <property type="entry name" value="UNDECAPRENYL-DIPHOSPHATASE"/>
    <property type="match status" value="1"/>
</dbReference>
<dbReference type="Pfam" id="PF02673">
    <property type="entry name" value="BacA"/>
    <property type="match status" value="1"/>
</dbReference>
<gene>
    <name evidence="1" type="primary">uppP1</name>
    <name type="ordered locus">Bamb_0794</name>
</gene>
<accession>Q0BHM0</accession>
<protein>
    <recommendedName>
        <fullName evidence="1">Undecaprenyl-diphosphatase 1</fullName>
        <ecNumber evidence="1">3.6.1.27</ecNumber>
    </recommendedName>
    <alternativeName>
        <fullName evidence="1">Bacitracin resistance protein 1</fullName>
    </alternativeName>
    <alternativeName>
        <fullName evidence="1">Undecaprenyl pyrophosphate phosphatase 1</fullName>
    </alternativeName>
</protein>
<proteinExistence type="inferred from homology"/>
<name>UPPP1_BURCM</name>